<reference key="1">
    <citation type="journal article" date="1990" name="Nucleic Acids Res.">
        <title>Boll weevil testis-specific cDNA.</title>
        <authorList>
            <person name="Trewitt P.M."/>
            <person name="Heilmann L.J."/>
            <person name="Kumaran A.K."/>
        </authorList>
    </citation>
    <scope>NUCLEOTIDE SEQUENCE [MRNA]</scope>
    <source>
        <tissue>Testis</tissue>
    </source>
</reference>
<feature type="chain" id="PRO_0000106644" description="Protamine">
    <location>
        <begin position="1"/>
        <end position="132"/>
    </location>
</feature>
<feature type="region of interest" description="Disordered" evidence="1">
    <location>
        <begin position="17"/>
        <end position="46"/>
    </location>
</feature>
<feature type="region of interest" description="Disordered" evidence="1">
    <location>
        <begin position="96"/>
        <end position="115"/>
    </location>
</feature>
<feature type="compositionally biased region" description="Basic residues" evidence="1">
    <location>
        <begin position="18"/>
        <end position="46"/>
    </location>
</feature>
<feature type="compositionally biased region" description="Basic residues" evidence="1">
    <location>
        <begin position="98"/>
        <end position="115"/>
    </location>
</feature>
<proteinExistence type="evidence at transcript level"/>
<evidence type="ECO:0000256" key="1">
    <source>
        <dbReference type="SAM" id="MobiDB-lite"/>
    </source>
</evidence>
<evidence type="ECO:0000305" key="2"/>
<dbReference type="EMBL" id="X52058">
    <property type="protein sequence ID" value="CAA36282.1"/>
    <property type="molecule type" value="mRNA"/>
</dbReference>
<dbReference type="PIR" id="S10305">
    <property type="entry name" value="S10305"/>
</dbReference>
<dbReference type="SMR" id="P17502"/>
<dbReference type="EnsemblMetazoa" id="XM_050455192.1">
    <property type="protein sequence ID" value="XP_050311149.1"/>
    <property type="gene ID" value="LOC126746795"/>
</dbReference>
<dbReference type="GO" id="GO:0000786">
    <property type="term" value="C:nucleosome"/>
    <property type="evidence" value="ECO:0007669"/>
    <property type="project" value="UniProtKB-KW"/>
</dbReference>
<dbReference type="GO" id="GO:0005634">
    <property type="term" value="C:nucleus"/>
    <property type="evidence" value="ECO:0007669"/>
    <property type="project" value="UniProtKB-SubCell"/>
</dbReference>
<dbReference type="GO" id="GO:0003677">
    <property type="term" value="F:DNA binding"/>
    <property type="evidence" value="ECO:0007669"/>
    <property type="project" value="UniProtKB-KW"/>
</dbReference>
<dbReference type="GO" id="GO:0030154">
    <property type="term" value="P:cell differentiation"/>
    <property type="evidence" value="ECO:0007669"/>
    <property type="project" value="UniProtKB-KW"/>
</dbReference>
<dbReference type="GO" id="GO:0030261">
    <property type="term" value="P:chromosome condensation"/>
    <property type="evidence" value="ECO:0007669"/>
    <property type="project" value="UniProtKB-KW"/>
</dbReference>
<dbReference type="GO" id="GO:0007283">
    <property type="term" value="P:spermatogenesis"/>
    <property type="evidence" value="ECO:0007669"/>
    <property type="project" value="UniProtKB-KW"/>
</dbReference>
<dbReference type="InterPro" id="IPR036910">
    <property type="entry name" value="HMG_box_dom_sf"/>
</dbReference>
<dbReference type="SUPFAM" id="SSF47095">
    <property type="entry name" value="HMG-box"/>
    <property type="match status" value="1"/>
</dbReference>
<name>PRT_ANTGR</name>
<protein>
    <recommendedName>
        <fullName>Protamine</fullName>
    </recommendedName>
</protein>
<keyword id="KW-0158">Chromosome</keyword>
<keyword id="KW-0217">Developmental protein</keyword>
<keyword id="KW-0221">Differentiation</keyword>
<keyword id="KW-0226">DNA condensation</keyword>
<keyword id="KW-0238">DNA-binding</keyword>
<keyword id="KW-0544">Nucleosome core</keyword>
<keyword id="KW-0539">Nucleus</keyword>
<keyword id="KW-0744">Spermatogenesis</keyword>
<accession>P17502</accession>
<organism>
    <name type="scientific">Anthonomus grandis</name>
    <name type="common">Mexican cotton boll weevil</name>
    <name type="synonym">Anthonomus thurberiae</name>
    <dbReference type="NCBI Taxonomy" id="7044"/>
    <lineage>
        <taxon>Eukaryota</taxon>
        <taxon>Metazoa</taxon>
        <taxon>Ecdysozoa</taxon>
        <taxon>Arthropoda</taxon>
        <taxon>Hexapoda</taxon>
        <taxon>Insecta</taxon>
        <taxon>Pterygota</taxon>
        <taxon>Neoptera</taxon>
        <taxon>Endopterygota</taxon>
        <taxon>Coleoptera</taxon>
        <taxon>Polyphaga</taxon>
        <taxon>Cucujiformia</taxon>
        <taxon>Curculionidae</taxon>
        <taxon>Curculioninae</taxon>
        <taxon>Anthonomini</taxon>
        <taxon>Anthonomus</taxon>
    </lineage>
</organism>
<comment type="function">
    <text>Protamines substitute for histones in the chromatin of sperm during the haploid phase of spermatogenesis. They compact sperm DNA into a highly condensed, stable and inactive complex.</text>
</comment>
<comment type="subcellular location">
    <subcellularLocation>
        <location>Nucleus</location>
    </subcellularLocation>
    <subcellularLocation>
        <location>Chromosome</location>
    </subcellularLocation>
</comment>
<comment type="tissue specificity">
    <text>Testis.</text>
</comment>
<comment type="similarity">
    <text evidence="2">Belongs to the UPF0771 family.</text>
</comment>
<sequence>MGLGFKCRHIPPSVYCGGKKRRRRRSKRRRSRCGRSRRRKSCRGGRKTNNPFLNYLRVFRKKHCGWPQCRIAIEGAKCWCKMSGRDRKKYYNQACSMLKKRGRRRRRRSCRRRRRSCRRRRRRRRSCNTCPK</sequence>